<comment type="function">
    <text>Actins are highly conserved proteins that are involved in various types of cell motility and are ubiquitously expressed in all eukaryotic cells.</text>
</comment>
<comment type="catalytic activity">
    <reaction evidence="1">
        <text>ATP + H2O = ADP + phosphate + H(+)</text>
        <dbReference type="Rhea" id="RHEA:13065"/>
        <dbReference type="ChEBI" id="CHEBI:15377"/>
        <dbReference type="ChEBI" id="CHEBI:15378"/>
        <dbReference type="ChEBI" id="CHEBI:30616"/>
        <dbReference type="ChEBI" id="CHEBI:43474"/>
        <dbReference type="ChEBI" id="CHEBI:456216"/>
    </reaction>
</comment>
<comment type="subcellular location">
    <subcellularLocation>
        <location>Cytoplasm</location>
        <location>Cytoskeleton</location>
    </subcellularLocation>
</comment>
<comment type="similarity">
    <text evidence="2">Belongs to the actin family.</text>
</comment>
<keyword id="KW-0067">ATP-binding</keyword>
<keyword id="KW-0963">Cytoplasm</keyword>
<keyword id="KW-0206">Cytoskeleton</keyword>
<keyword id="KW-0378">Hydrolase</keyword>
<keyword id="KW-0547">Nucleotide-binding</keyword>
<accession>Q8X119</accession>
<reference key="1">
    <citation type="submission" date="2001-12" db="EMBL/GenBank/DDBJ databases">
        <title>Exophiala (Wangiella) dermatitidis actin gene.</title>
        <authorList>
            <person name="Chen W."/>
            <person name="Szaniszlo P.J."/>
        </authorList>
    </citation>
    <scope>NUCLEOTIDE SEQUENCE [GENOMIC DNA]</scope>
    <source>
        <strain>8656</strain>
    </source>
</reference>
<feature type="chain" id="PRO_0000088940" description="Actin">
    <location>
        <begin position="1"/>
        <end position="375"/>
    </location>
</feature>
<sequence>MEEEVAALVIDNGSGMCKAGFAGDDAPRAVFPSIVGRPRHHGIMIGMGQKDSYVGDEAQSKRGILTLRYPIEHGVVTNWDDMEKIWHHTFYNELRVAPEEHPVLLTEAPINPKSNREKMTQIVFETFNAPAFYVSIQAVLSLYASGRTTGIVLDSGDGVTHVVPIYEGFALPHAISRVDMAGRDLTDYLMKILAERGYSFSTTAEREIVRDIKEKLCYVALDFEQEIQTASQSSRLEQSYELPDGQVITIGNERFRAPEALFQPSVLGLESGGIHVTTFNSIMKCDVDVRKDLYGNIVMSGGTTMYPGIADRMQKEITALAPSSMKVRIIAPPERKYSVWIGGSILASLSTFQQMWISKQEYDESGPSIVHRKCF</sequence>
<protein>
    <recommendedName>
        <fullName>Actin</fullName>
        <ecNumber evidence="1">3.6.4.-</ecNumber>
    </recommendedName>
</protein>
<name>ACT_EXODE</name>
<proteinExistence type="inferred from homology"/>
<organism>
    <name type="scientific">Exophiala dermatitidis</name>
    <name type="common">Black yeast-like fungus</name>
    <name type="synonym">Wangiella dermatitidis</name>
    <dbReference type="NCBI Taxonomy" id="5970"/>
    <lineage>
        <taxon>Eukaryota</taxon>
        <taxon>Fungi</taxon>
        <taxon>Dikarya</taxon>
        <taxon>Ascomycota</taxon>
        <taxon>Pezizomycotina</taxon>
        <taxon>Eurotiomycetes</taxon>
        <taxon>Chaetothyriomycetidae</taxon>
        <taxon>Chaetothyriales</taxon>
        <taxon>Herpotrichiellaceae</taxon>
        <taxon>Exophiala</taxon>
    </lineage>
</organism>
<evidence type="ECO:0000250" key="1">
    <source>
        <dbReference type="UniProtKB" id="P60010"/>
    </source>
</evidence>
<evidence type="ECO:0000305" key="2"/>
<dbReference type="EC" id="3.6.4.-" evidence="1"/>
<dbReference type="EMBL" id="AY071826">
    <property type="protein sequence ID" value="AAL68896.1"/>
    <property type="molecule type" value="Genomic_DNA"/>
</dbReference>
<dbReference type="SMR" id="Q8X119"/>
<dbReference type="VEuPathDB" id="FungiDB:HMPREF1120_04671"/>
<dbReference type="OMA" id="FHTTAER"/>
<dbReference type="GO" id="GO:0005737">
    <property type="term" value="C:cytoplasm"/>
    <property type="evidence" value="ECO:0007669"/>
    <property type="project" value="UniProtKB-KW"/>
</dbReference>
<dbReference type="GO" id="GO:0005856">
    <property type="term" value="C:cytoskeleton"/>
    <property type="evidence" value="ECO:0007669"/>
    <property type="project" value="UniProtKB-SubCell"/>
</dbReference>
<dbReference type="GO" id="GO:0005524">
    <property type="term" value="F:ATP binding"/>
    <property type="evidence" value="ECO:0007669"/>
    <property type="project" value="UniProtKB-KW"/>
</dbReference>
<dbReference type="GO" id="GO:0016787">
    <property type="term" value="F:hydrolase activity"/>
    <property type="evidence" value="ECO:0007669"/>
    <property type="project" value="UniProtKB-KW"/>
</dbReference>
<dbReference type="CDD" id="cd10224">
    <property type="entry name" value="ASKHA_NBD_actin"/>
    <property type="match status" value="1"/>
</dbReference>
<dbReference type="FunFam" id="3.30.420.40:FF:000131">
    <property type="entry name" value="Actin, alpha skeletal muscle"/>
    <property type="match status" value="1"/>
</dbReference>
<dbReference type="FunFam" id="3.30.420.40:FF:000291">
    <property type="entry name" value="Actin, alpha skeletal muscle"/>
    <property type="match status" value="1"/>
</dbReference>
<dbReference type="FunFam" id="3.90.640.10:FF:000001">
    <property type="entry name" value="Actin, muscle"/>
    <property type="match status" value="1"/>
</dbReference>
<dbReference type="FunFam" id="3.30.420.40:FF:000058">
    <property type="entry name" value="Putative actin-related protein 5"/>
    <property type="match status" value="1"/>
</dbReference>
<dbReference type="Gene3D" id="3.30.420.40">
    <property type="match status" value="2"/>
</dbReference>
<dbReference type="Gene3D" id="3.90.640.10">
    <property type="entry name" value="Actin, Chain A, domain 4"/>
    <property type="match status" value="1"/>
</dbReference>
<dbReference type="InterPro" id="IPR004000">
    <property type="entry name" value="Actin"/>
</dbReference>
<dbReference type="InterPro" id="IPR020902">
    <property type="entry name" value="Actin/actin-like_CS"/>
</dbReference>
<dbReference type="InterPro" id="IPR004001">
    <property type="entry name" value="Actin_CS"/>
</dbReference>
<dbReference type="InterPro" id="IPR043129">
    <property type="entry name" value="ATPase_NBD"/>
</dbReference>
<dbReference type="PANTHER" id="PTHR11937">
    <property type="entry name" value="ACTIN"/>
    <property type="match status" value="1"/>
</dbReference>
<dbReference type="Pfam" id="PF00022">
    <property type="entry name" value="Actin"/>
    <property type="match status" value="1"/>
</dbReference>
<dbReference type="PRINTS" id="PR00190">
    <property type="entry name" value="ACTIN"/>
</dbReference>
<dbReference type="SMART" id="SM00268">
    <property type="entry name" value="ACTIN"/>
    <property type="match status" value="1"/>
</dbReference>
<dbReference type="SUPFAM" id="SSF53067">
    <property type="entry name" value="Actin-like ATPase domain"/>
    <property type="match status" value="2"/>
</dbReference>
<dbReference type="PROSITE" id="PS00406">
    <property type="entry name" value="ACTINS_1"/>
    <property type="match status" value="1"/>
</dbReference>
<dbReference type="PROSITE" id="PS00432">
    <property type="entry name" value="ACTINS_2"/>
    <property type="match status" value="1"/>
</dbReference>
<dbReference type="PROSITE" id="PS01132">
    <property type="entry name" value="ACTINS_ACT_LIKE"/>
    <property type="match status" value="1"/>
</dbReference>